<dbReference type="EC" id="4.1.99.5" evidence="1"/>
<dbReference type="EMBL" id="AF143746">
    <property type="protein sequence ID" value="AAD29719.1"/>
    <property type="molecule type" value="mRNA"/>
</dbReference>
<dbReference type="EMBL" id="CM000135">
    <property type="protein sequence ID" value="EEC67150.1"/>
    <property type="molecule type" value="Genomic_DNA"/>
</dbReference>
<dbReference type="STRING" id="39946.B8BHF1"/>
<dbReference type="EnsemblPlants" id="BGIOSGA031709-TA">
    <property type="protein sequence ID" value="BGIOSGA031709-PA"/>
    <property type="gene ID" value="BGIOSGA031709"/>
</dbReference>
<dbReference type="Gramene" id="BGIOSGA031709-TA">
    <property type="protein sequence ID" value="BGIOSGA031709-PA"/>
    <property type="gene ID" value="BGIOSGA031709"/>
</dbReference>
<dbReference type="HOGENOM" id="CLU_017842_1_0_1"/>
<dbReference type="OMA" id="SYRWFMR"/>
<dbReference type="Proteomes" id="UP000007015">
    <property type="component" value="Chromosome 10"/>
</dbReference>
<dbReference type="GO" id="GO:0005789">
    <property type="term" value="C:endoplasmic reticulum membrane"/>
    <property type="evidence" value="ECO:0007669"/>
    <property type="project" value="UniProtKB-SubCell"/>
</dbReference>
<dbReference type="GO" id="GO:0043668">
    <property type="term" value="C:exine"/>
    <property type="evidence" value="ECO:0007669"/>
    <property type="project" value="EnsemblPlants"/>
</dbReference>
<dbReference type="GO" id="GO:0071771">
    <property type="term" value="F:aldehyde oxygenase (deformylating) activity"/>
    <property type="evidence" value="ECO:0007669"/>
    <property type="project" value="UniProtKB-EC"/>
</dbReference>
<dbReference type="GO" id="GO:0005506">
    <property type="term" value="F:iron ion binding"/>
    <property type="evidence" value="ECO:0007669"/>
    <property type="project" value="InterPro"/>
</dbReference>
<dbReference type="GO" id="GO:0016491">
    <property type="term" value="F:oxidoreductase activity"/>
    <property type="evidence" value="ECO:0007669"/>
    <property type="project" value="InterPro"/>
</dbReference>
<dbReference type="GO" id="GO:0048658">
    <property type="term" value="P:anther wall tapetum development"/>
    <property type="evidence" value="ECO:0007669"/>
    <property type="project" value="EnsemblPlants"/>
</dbReference>
<dbReference type="GO" id="GO:0010143">
    <property type="term" value="P:cutin biosynthetic process"/>
    <property type="evidence" value="ECO:0007669"/>
    <property type="project" value="EnsemblPlants"/>
</dbReference>
<dbReference type="GO" id="GO:0010584">
    <property type="term" value="P:pollen exine formation"/>
    <property type="evidence" value="ECO:0007669"/>
    <property type="project" value="EnsemblPlants"/>
</dbReference>
<dbReference type="GO" id="GO:0009737">
    <property type="term" value="P:response to abscisic acid"/>
    <property type="evidence" value="ECO:0007669"/>
    <property type="project" value="EnsemblPlants"/>
</dbReference>
<dbReference type="GO" id="GO:0009651">
    <property type="term" value="P:response to salt stress"/>
    <property type="evidence" value="ECO:0007669"/>
    <property type="project" value="EnsemblPlants"/>
</dbReference>
<dbReference type="GO" id="GO:0010025">
    <property type="term" value="P:wax biosynthetic process"/>
    <property type="evidence" value="ECO:0007669"/>
    <property type="project" value="EnsemblPlants"/>
</dbReference>
<dbReference type="InterPro" id="IPR021940">
    <property type="entry name" value="CER1-like_C"/>
</dbReference>
<dbReference type="InterPro" id="IPR006694">
    <property type="entry name" value="Fatty_acid_hydroxylase"/>
</dbReference>
<dbReference type="InterPro" id="IPR050307">
    <property type="entry name" value="Sterol_Desaturase_Related"/>
</dbReference>
<dbReference type="PANTHER" id="PTHR11863">
    <property type="entry name" value="STEROL DESATURASE"/>
    <property type="match status" value="1"/>
</dbReference>
<dbReference type="Pfam" id="PF12076">
    <property type="entry name" value="CER1-like_C"/>
    <property type="match status" value="1"/>
</dbReference>
<dbReference type="Pfam" id="PF04116">
    <property type="entry name" value="FA_hydroxylase"/>
    <property type="match status" value="1"/>
</dbReference>
<comment type="function">
    <text evidence="1">Aldehyde decarbonylase involved in the conversion of aldehydes to alkanes. Core component of a very-long-chain alkane synthesis complex.</text>
</comment>
<comment type="catalytic activity">
    <reaction evidence="1">
        <text>a long-chain fatty aldehyde + 2 NADPH + O2 + H(+) = a long-chain alkane + formate + 2 NADP(+) + H2O</text>
        <dbReference type="Rhea" id="RHEA:21440"/>
        <dbReference type="ChEBI" id="CHEBI:15377"/>
        <dbReference type="ChEBI" id="CHEBI:15378"/>
        <dbReference type="ChEBI" id="CHEBI:15379"/>
        <dbReference type="ChEBI" id="CHEBI:15740"/>
        <dbReference type="ChEBI" id="CHEBI:17176"/>
        <dbReference type="ChEBI" id="CHEBI:57783"/>
        <dbReference type="ChEBI" id="CHEBI:58349"/>
        <dbReference type="ChEBI" id="CHEBI:83563"/>
        <dbReference type="EC" id="4.1.99.5"/>
    </reaction>
</comment>
<comment type="subunit">
    <text evidence="1">Homodimer.</text>
</comment>
<comment type="subcellular location">
    <subcellularLocation>
        <location evidence="1">Endoplasmic reticulum membrane</location>
        <topology evidence="1">Multi-pass membrane protein</topology>
    </subcellularLocation>
</comment>
<comment type="developmental stage">
    <text evidence="3">Accumulates during the pollen mother cell meiotic stage.</text>
</comment>
<comment type="similarity">
    <text evidence="5">Belongs to the sterol desaturase family.</text>
</comment>
<name>GLO15_ORYSI</name>
<feature type="chain" id="PRO_0000445876" description="Very-long-chain aldehyde decarbonylase GL1-5">
    <location>
        <begin position="1"/>
        <end position="621"/>
    </location>
</feature>
<feature type="transmembrane region" description="Helical" evidence="2">
    <location>
        <begin position="99"/>
        <end position="119"/>
    </location>
</feature>
<feature type="transmembrane region" description="Helical" evidence="2">
    <location>
        <begin position="126"/>
        <end position="146"/>
    </location>
</feature>
<feature type="transmembrane region" description="Helical" evidence="2">
    <location>
        <begin position="186"/>
        <end position="206"/>
    </location>
</feature>
<feature type="transmembrane region" description="Helical" evidence="2">
    <location>
        <begin position="224"/>
        <end position="244"/>
    </location>
</feature>
<feature type="transmembrane region" description="Helical" evidence="2">
    <location>
        <begin position="332"/>
        <end position="352"/>
    </location>
</feature>
<feature type="domain" description="Fatty acid hydroxylase" evidence="2">
    <location>
        <begin position="138"/>
        <end position="272"/>
    </location>
</feature>
<feature type="sequence conflict" description="In Ref. 1; AAD29719." evidence="5" ref="1">
    <original>KKIRMQSWAIPRY</original>
    <variation>RDQDAVMGHYQDT</variation>
    <location>
        <begin position="358"/>
        <end position="370"/>
    </location>
</feature>
<feature type="sequence conflict" description="In Ref. 1; AAD29719." evidence="5" ref="1">
    <original>MAVPKTLQNVHSCENWLPRRVMSAWRIAGILHALE</original>
    <variation>IGCTKNAAECAFMRELAAKEGYGRMANGGNSSCVG</variation>
    <location>
        <begin position="555"/>
        <end position="589"/>
    </location>
</feature>
<feature type="sequence conflict" description="In Ref. 1; AAD29719." evidence="5" ref="1">
    <original>DMDKVWSAAIMHGFCPVA</original>
    <variation>GMAKVWTDTIEHGLCPVD</variation>
    <location>
        <begin position="602"/>
        <end position="619"/>
    </location>
</feature>
<accession>B8BHF1</accession>
<accession>Q9XH51</accession>
<proteinExistence type="evidence at transcript level"/>
<reference key="1">
    <citation type="journal article" date="1999" name="Plant Physiol.">
        <title>Isolation of a full length cDNA encoding a CER1 homolog in rice. (PGR99-104).</title>
        <authorList>
            <person name="Yau C.P."/>
            <person name="Zhuang C.X."/>
            <person name="Zee S.Y."/>
        </authorList>
    </citation>
    <scope>NUCLEOTIDE SEQUENCE [MRNA]</scope>
    <scope>DEVELOPMENTAL STAGE</scope>
    <source>
        <tissue>Anther</tissue>
    </source>
</reference>
<reference key="2">
    <citation type="journal article" date="2005" name="PLoS Biol.">
        <title>The genomes of Oryza sativa: a history of duplications.</title>
        <authorList>
            <person name="Yu J."/>
            <person name="Wang J."/>
            <person name="Lin W."/>
            <person name="Li S."/>
            <person name="Li H."/>
            <person name="Zhou J."/>
            <person name="Ni P."/>
            <person name="Dong W."/>
            <person name="Hu S."/>
            <person name="Zeng C."/>
            <person name="Zhang J."/>
            <person name="Zhang Y."/>
            <person name="Li R."/>
            <person name="Xu Z."/>
            <person name="Li S."/>
            <person name="Li X."/>
            <person name="Zheng H."/>
            <person name="Cong L."/>
            <person name="Lin L."/>
            <person name="Yin J."/>
            <person name="Geng J."/>
            <person name="Li G."/>
            <person name="Shi J."/>
            <person name="Liu J."/>
            <person name="Lv H."/>
            <person name="Li J."/>
            <person name="Wang J."/>
            <person name="Deng Y."/>
            <person name="Ran L."/>
            <person name="Shi X."/>
            <person name="Wang X."/>
            <person name="Wu Q."/>
            <person name="Li C."/>
            <person name="Ren X."/>
            <person name="Wang J."/>
            <person name="Wang X."/>
            <person name="Li D."/>
            <person name="Liu D."/>
            <person name="Zhang X."/>
            <person name="Ji Z."/>
            <person name="Zhao W."/>
            <person name="Sun Y."/>
            <person name="Zhang Z."/>
            <person name="Bao J."/>
            <person name="Han Y."/>
            <person name="Dong L."/>
            <person name="Ji J."/>
            <person name="Chen P."/>
            <person name="Wu S."/>
            <person name="Liu J."/>
            <person name="Xiao Y."/>
            <person name="Bu D."/>
            <person name="Tan J."/>
            <person name="Yang L."/>
            <person name="Ye C."/>
            <person name="Zhang J."/>
            <person name="Xu J."/>
            <person name="Zhou Y."/>
            <person name="Yu Y."/>
            <person name="Zhang B."/>
            <person name="Zhuang S."/>
            <person name="Wei H."/>
            <person name="Liu B."/>
            <person name="Lei M."/>
            <person name="Yu H."/>
            <person name="Li Y."/>
            <person name="Xu H."/>
            <person name="Wei S."/>
            <person name="He X."/>
            <person name="Fang L."/>
            <person name="Zhang Z."/>
            <person name="Zhang Y."/>
            <person name="Huang X."/>
            <person name="Su Z."/>
            <person name="Tong W."/>
            <person name="Li J."/>
            <person name="Tong Z."/>
            <person name="Li S."/>
            <person name="Ye J."/>
            <person name="Wang L."/>
            <person name="Fang L."/>
            <person name="Lei T."/>
            <person name="Chen C.-S."/>
            <person name="Chen H.-C."/>
            <person name="Xu Z."/>
            <person name="Li H."/>
            <person name="Huang H."/>
            <person name="Zhang F."/>
            <person name="Xu H."/>
            <person name="Li N."/>
            <person name="Zhao C."/>
            <person name="Li S."/>
            <person name="Dong L."/>
            <person name="Huang Y."/>
            <person name="Li L."/>
            <person name="Xi Y."/>
            <person name="Qi Q."/>
            <person name="Li W."/>
            <person name="Zhang B."/>
            <person name="Hu W."/>
            <person name="Zhang Y."/>
            <person name="Tian X."/>
            <person name="Jiao Y."/>
            <person name="Liang X."/>
            <person name="Jin J."/>
            <person name="Gao L."/>
            <person name="Zheng W."/>
            <person name="Hao B."/>
            <person name="Liu S.-M."/>
            <person name="Wang W."/>
            <person name="Yuan L."/>
            <person name="Cao M."/>
            <person name="McDermott J."/>
            <person name="Samudrala R."/>
            <person name="Wang J."/>
            <person name="Wong G.K.-S."/>
            <person name="Yang H."/>
        </authorList>
    </citation>
    <scope>NUCLEOTIDE SEQUENCE [LARGE SCALE GENOMIC DNA]</scope>
    <source>
        <strain>cv. 93-11</strain>
    </source>
</reference>
<protein>
    <recommendedName>
        <fullName evidence="5">Very-long-chain aldehyde decarbonylase GL1-5</fullName>
        <ecNumber evidence="1">4.1.99.5</ecNumber>
    </recommendedName>
    <alternativeName>
        <fullName evidence="4">Protein ECERIFERUM 1</fullName>
        <shortName evidence="4">Os-CER1</shortName>
    </alternativeName>
    <alternativeName>
        <fullName evidence="5">Protein GLOSSY 1-5</fullName>
    </alternativeName>
</protein>
<evidence type="ECO:0000250" key="1">
    <source>
        <dbReference type="UniProtKB" id="F4HVY0"/>
    </source>
</evidence>
<evidence type="ECO:0000255" key="2"/>
<evidence type="ECO:0000269" key="3">
    <source ref="1"/>
</evidence>
<evidence type="ECO:0000303" key="4">
    <source ref="1"/>
</evidence>
<evidence type="ECO:0000305" key="5"/>
<evidence type="ECO:0000312" key="6">
    <source>
        <dbReference type="EMBL" id="EEC67150.1"/>
    </source>
</evidence>
<sequence length="621" mass="71191">MATNPGLFTEWPWKKLGSFKYVLLAPWVAHGWYEVATKGRREVDLGYIAILPSLLLRMLHNQAWITISRLQNARGRRQIVRRGIEFDQVDRERNWDDQIILSGILLYLGALYVPGGQHLPLWRTDGAGLIALLHAGPVEFLYYWFHRALHHHFLYTRYHSHHHSSIVTEPITSVIHPFAELVAYELLFSIPLIACALTGTASIIAFEMYLIYIDFMNNMGHCNFELVPSWLFTWFPPLKYLMYTPSFHSLHHTQFRTNYSLFMPFYDYIYNTMDKSSDTLYENSLKNNDEEEAVDVVHLTHLTTLHSIYHMRPGFAEFASRPYVSRWYMRMMWPLSWLSMVLTWTYGSSFTVERNVMKKIRMQSWAIPRYSFHYGLDWEKEAINDLIEKAVCEADKNGAKVVSLGLLNQAHTLNKSGEQYLLKYPKLGARIVDGTSLAAAVVVNSIPQGTDQVILAGNVSKVARAVAQALCKKNIKVTMTNKQDYHLLKPEIPETVADNLSFSKTGTAKVWLIGDGLDSAEQFRAQKGTLFIPYSQFPPKMVRKDSCSYSTTPAMAVPKTLQNVHSCENWLPRRVMSAWRIAGILHALEGWNEHECGDKVLDMDKVWSAAIMHGFCPVAQG</sequence>
<organism>
    <name type="scientific">Oryza sativa subsp. indica</name>
    <name type="common">Rice</name>
    <dbReference type="NCBI Taxonomy" id="39946"/>
    <lineage>
        <taxon>Eukaryota</taxon>
        <taxon>Viridiplantae</taxon>
        <taxon>Streptophyta</taxon>
        <taxon>Embryophyta</taxon>
        <taxon>Tracheophyta</taxon>
        <taxon>Spermatophyta</taxon>
        <taxon>Magnoliopsida</taxon>
        <taxon>Liliopsida</taxon>
        <taxon>Poales</taxon>
        <taxon>Poaceae</taxon>
        <taxon>BOP clade</taxon>
        <taxon>Oryzoideae</taxon>
        <taxon>Oryzeae</taxon>
        <taxon>Oryzinae</taxon>
        <taxon>Oryza</taxon>
        <taxon>Oryza sativa</taxon>
    </lineage>
</organism>
<gene>
    <name evidence="5" type="primary">GL1-5</name>
    <name evidence="4" type="synonym">CER1</name>
    <name evidence="6" type="ORF">OsI_33995</name>
</gene>
<keyword id="KW-0256">Endoplasmic reticulum</keyword>
<keyword id="KW-0456">Lyase</keyword>
<keyword id="KW-0472">Membrane</keyword>
<keyword id="KW-0521">NADP</keyword>
<keyword id="KW-1185">Reference proteome</keyword>
<keyword id="KW-0812">Transmembrane</keyword>
<keyword id="KW-1133">Transmembrane helix</keyword>